<reference key="1">
    <citation type="journal article" date="1999" name="Nature">
        <title>Sequence and analysis of chromosome 2 of the plant Arabidopsis thaliana.</title>
        <authorList>
            <person name="Lin X."/>
            <person name="Kaul S."/>
            <person name="Rounsley S.D."/>
            <person name="Shea T.P."/>
            <person name="Benito M.-I."/>
            <person name="Town C.D."/>
            <person name="Fujii C.Y."/>
            <person name="Mason T.M."/>
            <person name="Bowman C.L."/>
            <person name="Barnstead M.E."/>
            <person name="Feldblyum T.V."/>
            <person name="Buell C.R."/>
            <person name="Ketchum K.A."/>
            <person name="Lee J.J."/>
            <person name="Ronning C.M."/>
            <person name="Koo H.L."/>
            <person name="Moffat K.S."/>
            <person name="Cronin L.A."/>
            <person name="Shen M."/>
            <person name="Pai G."/>
            <person name="Van Aken S."/>
            <person name="Umayam L."/>
            <person name="Tallon L.J."/>
            <person name="Gill J.E."/>
            <person name="Adams M.D."/>
            <person name="Carrera A.J."/>
            <person name="Creasy T.H."/>
            <person name="Goodman H.M."/>
            <person name="Somerville C.R."/>
            <person name="Copenhaver G.P."/>
            <person name="Preuss D."/>
            <person name="Nierman W.C."/>
            <person name="White O."/>
            <person name="Eisen J.A."/>
            <person name="Salzberg S.L."/>
            <person name="Fraser C.M."/>
            <person name="Venter J.C."/>
        </authorList>
    </citation>
    <scope>NUCLEOTIDE SEQUENCE [LARGE SCALE GENOMIC DNA]</scope>
    <source>
        <strain>cv. Columbia</strain>
    </source>
</reference>
<reference key="2">
    <citation type="journal article" date="2017" name="Plant J.">
        <title>Araport11: a complete reannotation of the Arabidopsis thaliana reference genome.</title>
        <authorList>
            <person name="Cheng C.Y."/>
            <person name="Krishnakumar V."/>
            <person name="Chan A.P."/>
            <person name="Thibaud-Nissen F."/>
            <person name="Schobel S."/>
            <person name="Town C.D."/>
        </authorList>
    </citation>
    <scope>GENOME REANNOTATION</scope>
    <source>
        <strain>cv. Columbia</strain>
    </source>
</reference>
<reference key="3">
    <citation type="journal article" date="2001" name="Plant Physiol.">
        <title>A large family of genes that share homology with CLAVATA3.</title>
        <authorList>
            <person name="Cock J.M."/>
            <person name="McCormick S."/>
        </authorList>
    </citation>
    <scope>GENE FAMILY</scope>
    <scope>NOMENCLATURE</scope>
</reference>
<reference key="4">
    <citation type="journal article" date="2003" name="Plant Mol. Biol.">
        <title>The Arabidopsis CLV3-like (CLE) genes are expressed in diverse tissues and encode secreted proteins.</title>
        <authorList>
            <person name="Sharma V.K."/>
            <person name="Ramirez J."/>
            <person name="Fletcher J.C."/>
        </authorList>
    </citation>
    <scope>TISSUE SPECIFICITY</scope>
</reference>
<reference key="5">
    <citation type="journal article" date="2006" name="Plant Physiol.">
        <title>Gain-of-function phenotypes of many CLAVATA3/ESR genes, including four new family members, correlate with tandem variations in the conserved CLAVATA3/ESR domain.</title>
        <authorList>
            <person name="Strabala T.J."/>
            <person name="O'donnell P.J."/>
            <person name="Smit A.-M."/>
            <person name="Ampomah-Dwamena C."/>
            <person name="Martin E.J."/>
            <person name="Netzler N."/>
            <person name="Nieuwenhuizen N.J."/>
            <person name="Quinn B.D."/>
            <person name="Foote H.C.C."/>
            <person name="Hudson K.R."/>
        </authorList>
    </citation>
    <scope>FUNCTION</scope>
    <scope>GENE FAMILY</scope>
</reference>
<reference key="6">
    <citation type="journal article" date="2008" name="Cell. Mol. Life Sci.">
        <title>The CLE family of plant polypeptide signaling molecules.</title>
        <authorList>
            <person name="Jun J.H."/>
            <person name="Fiume E."/>
            <person name="Fletcher J.C."/>
        </authorList>
    </citation>
    <scope>REVIEW</scope>
</reference>
<reference key="7">
    <citation type="journal article" date="2008" name="Curr. Opin. Plant Biol.">
        <title>Diverse and conserved roles of CLE peptides.</title>
        <authorList>
            <person name="Mitchum M.G."/>
            <person name="Wang X."/>
            <person name="Davis E.L."/>
        </authorList>
    </citation>
    <scope>REVIEW</scope>
</reference>
<reference key="8">
    <citation type="journal article" date="2010" name="Protoplasma">
        <title>CLE peptide signaling during plant development.</title>
        <authorList>
            <person name="Wang G."/>
            <person name="Fiers M."/>
        </authorList>
    </citation>
    <scope>REVIEW</scope>
</reference>
<protein>
    <recommendedName>
        <fullName evidence="7">CLAVATA3/ESR (CLE)-related protein 7</fullName>
    </recommendedName>
    <component>
        <recommendedName>
            <fullName evidence="7">CLE7p</fullName>
        </recommendedName>
    </component>
</protein>
<name>CLE7_ARATH</name>
<keyword id="KW-0217">Developmental protein</keyword>
<keyword id="KW-0221">Differentiation</keyword>
<keyword id="KW-0325">Glycoprotein</keyword>
<keyword id="KW-0379">Hydroxylation</keyword>
<keyword id="KW-1185">Reference proteome</keyword>
<keyword id="KW-0964">Secreted</keyword>
<keyword id="KW-0732">Signal</keyword>
<accession>Q8S8N1</accession>
<sequence length="86" mass="9738">MASKALLLFVMLTFLLVIEMEGRILRVNSKTKDGESNDLLKRLGYNVSELKRIGRELSVQNEVDRFSPGGPDPQHHSYPLSSKPRI</sequence>
<dbReference type="EMBL" id="AC005311">
    <property type="protein sequence ID" value="AAM15028.1"/>
    <property type="molecule type" value="Genomic_DNA"/>
</dbReference>
<dbReference type="EMBL" id="CP002685">
    <property type="protein sequence ID" value="AEC08489.1"/>
    <property type="molecule type" value="Genomic_DNA"/>
</dbReference>
<dbReference type="RefSeq" id="NP_850158.1">
    <property type="nucleotide sequence ID" value="NM_179827.2"/>
</dbReference>
<dbReference type="BioGRID" id="3010">
    <property type="interactions" value="1"/>
</dbReference>
<dbReference type="STRING" id="3702.Q8S8N1"/>
<dbReference type="GlyCosmos" id="Q8S8N1">
    <property type="glycosylation" value="2 sites, No reported glycans"/>
</dbReference>
<dbReference type="GlyGen" id="Q8S8N1">
    <property type="glycosylation" value="1 site"/>
</dbReference>
<dbReference type="PaxDb" id="3702-AT2G31082.1"/>
<dbReference type="EnsemblPlants" id="AT2G31082.1">
    <property type="protein sequence ID" value="AT2G31082.1"/>
    <property type="gene ID" value="AT2G31082"/>
</dbReference>
<dbReference type="GeneID" id="817662"/>
<dbReference type="Gramene" id="AT2G31082.1">
    <property type="protein sequence ID" value="AT2G31082.1"/>
    <property type="gene ID" value="AT2G31082"/>
</dbReference>
<dbReference type="KEGG" id="ath:AT2G31082"/>
<dbReference type="Araport" id="AT2G31082"/>
<dbReference type="TAIR" id="AT2G31082">
    <property type="gene designation" value="CLE7"/>
</dbReference>
<dbReference type="HOGENOM" id="CLU_154904_1_0_1"/>
<dbReference type="InParanoid" id="Q8S8N1"/>
<dbReference type="OrthoDB" id="1406315at2759"/>
<dbReference type="PhylomeDB" id="Q8S8N1"/>
<dbReference type="PRO" id="PR:Q8S8N1"/>
<dbReference type="Proteomes" id="UP000006548">
    <property type="component" value="Chromosome 2"/>
</dbReference>
<dbReference type="ExpressionAtlas" id="Q8S8N1">
    <property type="expression patterns" value="baseline and differential"/>
</dbReference>
<dbReference type="GO" id="GO:0048046">
    <property type="term" value="C:apoplast"/>
    <property type="evidence" value="ECO:0000255"/>
    <property type="project" value="TAIR"/>
</dbReference>
<dbReference type="GO" id="GO:0045168">
    <property type="term" value="P:cell-cell signaling involved in cell fate commitment"/>
    <property type="evidence" value="ECO:0000250"/>
    <property type="project" value="UniProtKB"/>
</dbReference>
<dbReference type="InterPro" id="IPR039617">
    <property type="entry name" value="CLAVATA3-CLE"/>
</dbReference>
<dbReference type="PANTHER" id="PTHR36016">
    <property type="entry name" value="CLAVATA3/ESR (CLE)-RELATED PROTEIN 7"/>
    <property type="match status" value="1"/>
</dbReference>
<dbReference type="PANTHER" id="PTHR36016:SF1">
    <property type="entry name" value="CLAVATA3_ESR (CLE)-RELATED PROTEIN 5-RELATED"/>
    <property type="match status" value="1"/>
</dbReference>
<comment type="function">
    <molecule>CLE7p</molecule>
    <text evidence="6">Extracellular signal peptide that regulates cell fate.</text>
</comment>
<comment type="subcellular location">
    <molecule>CLE7p</molecule>
    <subcellularLocation>
        <location evidence="1">Secreted</location>
        <location evidence="1">Extracellular space</location>
    </subcellularLocation>
</comment>
<comment type="tissue specificity">
    <molecule>CLE7p</molecule>
    <text evidence="5">Expressed in roots and seedlings.</text>
</comment>
<comment type="PTM">
    <molecule>CLE7p</molecule>
    <text evidence="1">The O-glycosylation (arabinosylation) of the hydroxyproline Pro-71 enhances binding affinity of the CLE7p peptide for its receptor.</text>
</comment>
<comment type="similarity">
    <text evidence="10">Belongs to the CLV3/ESR signal peptide family.</text>
</comment>
<gene>
    <name evidence="7 8 9" type="primary">CLE7</name>
    <name type="synonym">CLE5</name>
    <name evidence="11" type="ordered locus">At2g31082</name>
    <name evidence="12" type="ORF">T16B12</name>
</gene>
<evidence type="ECO:0000250" key="1">
    <source>
        <dbReference type="UniProtKB" id="O49519"/>
    </source>
</evidence>
<evidence type="ECO:0000255" key="2"/>
<evidence type="ECO:0000255" key="3">
    <source>
        <dbReference type="PROSITE-ProRule" id="PRU00498"/>
    </source>
</evidence>
<evidence type="ECO:0000256" key="4">
    <source>
        <dbReference type="SAM" id="MobiDB-lite"/>
    </source>
</evidence>
<evidence type="ECO:0000269" key="5">
    <source>
    </source>
</evidence>
<evidence type="ECO:0000269" key="6">
    <source>
    </source>
</evidence>
<evidence type="ECO:0000303" key="7">
    <source>
    </source>
</evidence>
<evidence type="ECO:0000303" key="8">
    <source>
    </source>
</evidence>
<evidence type="ECO:0000303" key="9">
    <source>
    </source>
</evidence>
<evidence type="ECO:0000305" key="10"/>
<evidence type="ECO:0000312" key="11">
    <source>
        <dbReference type="Araport" id="AT2G31082"/>
    </source>
</evidence>
<evidence type="ECO:0000312" key="12">
    <source>
        <dbReference type="EMBL" id="AAM15028.1"/>
    </source>
</evidence>
<feature type="signal peptide" evidence="2">
    <location>
        <begin position="1"/>
        <end position="22"/>
    </location>
</feature>
<feature type="chain" id="PRO_0000401245" description="CLAVATA3/ESR (CLE)-related protein 7">
    <location>
        <begin position="23"/>
        <end position="86"/>
    </location>
</feature>
<feature type="peptide" id="PRO_0000401246" description="CLE7p" evidence="1">
    <location>
        <begin position="65"/>
        <end position="76"/>
    </location>
</feature>
<feature type="region of interest" description="Disordered" evidence="4">
    <location>
        <begin position="63"/>
        <end position="86"/>
    </location>
</feature>
<feature type="modified residue" description="Hydroxyproline" evidence="1">
    <location>
        <position position="68"/>
    </location>
</feature>
<feature type="modified residue" description="Hydroxyproline" evidence="1">
    <location>
        <position position="71"/>
    </location>
</feature>
<feature type="glycosylation site" description="N-linked (GlcNAc...) asparagine" evidence="3">
    <location>
        <position position="46"/>
    </location>
</feature>
<feature type="glycosylation site" description="O-linked (Ara...) hydroxyproline" evidence="1">
    <location>
        <position position="71"/>
    </location>
</feature>
<proteinExistence type="evidence at transcript level"/>
<organism>
    <name type="scientific">Arabidopsis thaliana</name>
    <name type="common">Mouse-ear cress</name>
    <dbReference type="NCBI Taxonomy" id="3702"/>
    <lineage>
        <taxon>Eukaryota</taxon>
        <taxon>Viridiplantae</taxon>
        <taxon>Streptophyta</taxon>
        <taxon>Embryophyta</taxon>
        <taxon>Tracheophyta</taxon>
        <taxon>Spermatophyta</taxon>
        <taxon>Magnoliopsida</taxon>
        <taxon>eudicotyledons</taxon>
        <taxon>Gunneridae</taxon>
        <taxon>Pentapetalae</taxon>
        <taxon>rosids</taxon>
        <taxon>malvids</taxon>
        <taxon>Brassicales</taxon>
        <taxon>Brassicaceae</taxon>
        <taxon>Camelineae</taxon>
        <taxon>Arabidopsis</taxon>
    </lineage>
</organism>